<gene>
    <name evidence="2" type="primary">infB</name>
    <name type="ordered locus">cgR_1814</name>
</gene>
<evidence type="ECO:0000250" key="1"/>
<evidence type="ECO:0000255" key="2">
    <source>
        <dbReference type="HAMAP-Rule" id="MF_00100"/>
    </source>
</evidence>
<evidence type="ECO:0000256" key="3">
    <source>
        <dbReference type="SAM" id="MobiDB-lite"/>
    </source>
</evidence>
<name>IF2_CORGB</name>
<proteinExistence type="inferred from homology"/>
<protein>
    <recommendedName>
        <fullName evidence="2">Translation initiation factor IF-2</fullName>
    </recommendedName>
</protein>
<accession>A4QEZ2</accession>
<keyword id="KW-0963">Cytoplasm</keyword>
<keyword id="KW-0342">GTP-binding</keyword>
<keyword id="KW-0396">Initiation factor</keyword>
<keyword id="KW-0547">Nucleotide-binding</keyword>
<keyword id="KW-0648">Protein biosynthesis</keyword>
<sequence length="1003" mass="103374">MPGKLRVHELAKQLGITSKELLATLKDKGEFVKTASSTIEPPVVKRMQEHYGSSGSDKSDTAAKPAAAKPAAPKPAASAAPKPGAPAKPAAPAAKPAPAAASAAKPGAAPKPGVQAKPAAAAKPGAPAKPAAPSAAKPGSAPKPAAAAKPAFSGPTPGDAAKKAEPAAKPGAEAPRPDGMPRPMGKPAPKPGARAPRVANNPFSTGGGERPAPRPGGGPRPGGGPRPGGGPRPQGQGRPGGQRDGQRDGQRDGQGNRGGQRQGAGAGGPRPQGGPRPQGGSRPQGGSAQGGSAKGAQGAPSQERQGGGRRPSPAMMPPTPGQMPAKAPGKGGRGGQAGGGAGGGFNRGGGTGGGAGRGGRRGGTAGAFGRPGGAPRRGRKSKRQKRNEYESMQAPNVIGGVRLPDGKGATIRLARGASLADFADKIGADAAALVQALFNLGEMVTATASVSDETLQLLGEEMNYKVQVVSPEDEDRELLESFDLQFGEDEGGEADLAKRPPVVTVMGHVDHGKTRLLDTIRKANVGSDEAGGITQGIGAYQVKVNVEDTERTITFLDTPGHEAFTAMRARGAKSTDIAVLVVAADDGVMPQTVEAINHAKAADVPIVVAVNKIDKPEASPEKIRGQLTEYGLIPEEYGGDTIFVDISAKQGLNIDELLASVCLTADAELDLVANPEMDAQGVAIEAHLDRGRGPVATVIVQRGTLRVGDSIVAGDTYGRVRRMVDEYGRDVEEAGPSRPVQVQGLNGVPGAGDNLLVVEDDRIARQIANQRNARKRNALAARSRKRVSLEDLDSVLKEHSTLNLILKGDNAGSVEALEEALLKIEMDDEVQLNIIDRGVGAVTQTNVTLAAASDAVIIAFNVRAEGKATEEANAEGVDVRYYTIIYRAIEEVEAALKGMLKPIYEERVIGHAEIRAIFKASSVGLIAGCMVEDGKVRRNATVRITRDGNVIAENAKIVSLRREKDDATEVSAGYECGMVLSYPDISVDDKIEVYEMVEVPREA</sequence>
<comment type="function">
    <text evidence="2">One of the essential components for the initiation of protein synthesis. Protects formylmethionyl-tRNA from spontaneous hydrolysis and promotes its binding to the 30S ribosomal subunits. Also involved in the hydrolysis of GTP during the formation of the 70S ribosomal complex.</text>
</comment>
<comment type="subcellular location">
    <subcellularLocation>
        <location evidence="2">Cytoplasm</location>
    </subcellularLocation>
</comment>
<comment type="similarity">
    <text evidence="2">Belongs to the TRAFAC class translation factor GTPase superfamily. Classic translation factor GTPase family. IF-2 subfamily.</text>
</comment>
<dbReference type="EMBL" id="AP009044">
    <property type="protein sequence ID" value="BAF54808.1"/>
    <property type="molecule type" value="Genomic_DNA"/>
</dbReference>
<dbReference type="RefSeq" id="WP_011897398.1">
    <property type="nucleotide sequence ID" value="NC_009342.1"/>
</dbReference>
<dbReference type="SMR" id="A4QEZ2"/>
<dbReference type="KEGG" id="cgt:cgR_1814"/>
<dbReference type="HOGENOM" id="CLU_006301_9_0_11"/>
<dbReference type="PhylomeDB" id="A4QEZ2"/>
<dbReference type="Proteomes" id="UP000006698">
    <property type="component" value="Chromosome"/>
</dbReference>
<dbReference type="GO" id="GO:0005829">
    <property type="term" value="C:cytosol"/>
    <property type="evidence" value="ECO:0007669"/>
    <property type="project" value="TreeGrafter"/>
</dbReference>
<dbReference type="GO" id="GO:0005525">
    <property type="term" value="F:GTP binding"/>
    <property type="evidence" value="ECO:0007669"/>
    <property type="project" value="UniProtKB-KW"/>
</dbReference>
<dbReference type="GO" id="GO:0003924">
    <property type="term" value="F:GTPase activity"/>
    <property type="evidence" value="ECO:0007669"/>
    <property type="project" value="UniProtKB-UniRule"/>
</dbReference>
<dbReference type="GO" id="GO:0003743">
    <property type="term" value="F:translation initiation factor activity"/>
    <property type="evidence" value="ECO:0007669"/>
    <property type="project" value="UniProtKB-UniRule"/>
</dbReference>
<dbReference type="CDD" id="cd01887">
    <property type="entry name" value="IF2_eIF5B"/>
    <property type="match status" value="1"/>
</dbReference>
<dbReference type="CDD" id="cd03702">
    <property type="entry name" value="IF2_mtIF2_II"/>
    <property type="match status" value="1"/>
</dbReference>
<dbReference type="CDD" id="cd03692">
    <property type="entry name" value="mtIF2_IVc"/>
    <property type="match status" value="1"/>
</dbReference>
<dbReference type="FunFam" id="2.40.30.10:FF:000007">
    <property type="entry name" value="Translation initiation factor IF-2"/>
    <property type="match status" value="1"/>
</dbReference>
<dbReference type="FunFam" id="2.40.30.10:FF:000008">
    <property type="entry name" value="Translation initiation factor IF-2"/>
    <property type="match status" value="1"/>
</dbReference>
<dbReference type="FunFam" id="3.40.50.10050:FF:000001">
    <property type="entry name" value="Translation initiation factor IF-2"/>
    <property type="match status" value="1"/>
</dbReference>
<dbReference type="FunFam" id="3.40.50.300:FF:000019">
    <property type="entry name" value="Translation initiation factor IF-2"/>
    <property type="match status" value="1"/>
</dbReference>
<dbReference type="Gene3D" id="1.10.10.2480">
    <property type="match status" value="1"/>
</dbReference>
<dbReference type="Gene3D" id="3.40.50.300">
    <property type="entry name" value="P-loop containing nucleotide triphosphate hydrolases"/>
    <property type="match status" value="1"/>
</dbReference>
<dbReference type="Gene3D" id="2.40.30.10">
    <property type="entry name" value="Translation factors"/>
    <property type="match status" value="2"/>
</dbReference>
<dbReference type="Gene3D" id="3.40.50.10050">
    <property type="entry name" value="Translation initiation factor IF- 2, domain 3"/>
    <property type="match status" value="1"/>
</dbReference>
<dbReference type="HAMAP" id="MF_00100_B">
    <property type="entry name" value="IF_2_B"/>
    <property type="match status" value="1"/>
</dbReference>
<dbReference type="InterPro" id="IPR053905">
    <property type="entry name" value="EF-G-like_DII"/>
</dbReference>
<dbReference type="InterPro" id="IPR044145">
    <property type="entry name" value="IF2_II"/>
</dbReference>
<dbReference type="InterPro" id="IPR006847">
    <property type="entry name" value="IF2_N"/>
</dbReference>
<dbReference type="InterPro" id="IPR027417">
    <property type="entry name" value="P-loop_NTPase"/>
</dbReference>
<dbReference type="InterPro" id="IPR005225">
    <property type="entry name" value="Small_GTP-bd"/>
</dbReference>
<dbReference type="InterPro" id="IPR000795">
    <property type="entry name" value="T_Tr_GTP-bd_dom"/>
</dbReference>
<dbReference type="InterPro" id="IPR000178">
    <property type="entry name" value="TF_IF2_bacterial-like"/>
</dbReference>
<dbReference type="InterPro" id="IPR015760">
    <property type="entry name" value="TIF_IF2"/>
</dbReference>
<dbReference type="InterPro" id="IPR023115">
    <property type="entry name" value="TIF_IF2_dom3"/>
</dbReference>
<dbReference type="InterPro" id="IPR036925">
    <property type="entry name" value="TIF_IF2_dom3_sf"/>
</dbReference>
<dbReference type="InterPro" id="IPR009000">
    <property type="entry name" value="Transl_B-barrel_sf"/>
</dbReference>
<dbReference type="NCBIfam" id="TIGR00487">
    <property type="entry name" value="IF-2"/>
    <property type="match status" value="1"/>
</dbReference>
<dbReference type="NCBIfam" id="TIGR00231">
    <property type="entry name" value="small_GTP"/>
    <property type="match status" value="1"/>
</dbReference>
<dbReference type="PANTHER" id="PTHR43381:SF5">
    <property type="entry name" value="TR-TYPE G DOMAIN-CONTAINING PROTEIN"/>
    <property type="match status" value="1"/>
</dbReference>
<dbReference type="PANTHER" id="PTHR43381">
    <property type="entry name" value="TRANSLATION INITIATION FACTOR IF-2-RELATED"/>
    <property type="match status" value="1"/>
</dbReference>
<dbReference type="Pfam" id="PF22042">
    <property type="entry name" value="EF-G_D2"/>
    <property type="match status" value="1"/>
</dbReference>
<dbReference type="Pfam" id="PF00009">
    <property type="entry name" value="GTP_EFTU"/>
    <property type="match status" value="1"/>
</dbReference>
<dbReference type="Pfam" id="PF11987">
    <property type="entry name" value="IF-2"/>
    <property type="match status" value="1"/>
</dbReference>
<dbReference type="Pfam" id="PF04760">
    <property type="entry name" value="IF2_N"/>
    <property type="match status" value="2"/>
</dbReference>
<dbReference type="PRINTS" id="PR00315">
    <property type="entry name" value="ELONGATNFCT"/>
</dbReference>
<dbReference type="SUPFAM" id="SSF52156">
    <property type="entry name" value="Initiation factor IF2/eIF5b, domain 3"/>
    <property type="match status" value="1"/>
</dbReference>
<dbReference type="SUPFAM" id="SSF52540">
    <property type="entry name" value="P-loop containing nucleoside triphosphate hydrolases"/>
    <property type="match status" value="1"/>
</dbReference>
<dbReference type="SUPFAM" id="SSF50447">
    <property type="entry name" value="Translation proteins"/>
    <property type="match status" value="2"/>
</dbReference>
<dbReference type="PROSITE" id="PS51722">
    <property type="entry name" value="G_TR_2"/>
    <property type="match status" value="1"/>
</dbReference>
<feature type="chain" id="PRO_1000008235" description="Translation initiation factor IF-2">
    <location>
        <begin position="1"/>
        <end position="1003"/>
    </location>
</feature>
<feature type="domain" description="tr-type G">
    <location>
        <begin position="498"/>
        <end position="670"/>
    </location>
</feature>
<feature type="region of interest" description="Disordered" evidence="3">
    <location>
        <begin position="36"/>
        <end position="392"/>
    </location>
</feature>
<feature type="region of interest" description="G1" evidence="1">
    <location>
        <begin position="507"/>
        <end position="514"/>
    </location>
</feature>
<feature type="region of interest" description="G2" evidence="1">
    <location>
        <begin position="532"/>
        <end position="536"/>
    </location>
</feature>
<feature type="region of interest" description="G3" evidence="1">
    <location>
        <begin position="557"/>
        <end position="560"/>
    </location>
</feature>
<feature type="region of interest" description="G4" evidence="1">
    <location>
        <begin position="611"/>
        <end position="614"/>
    </location>
</feature>
<feature type="region of interest" description="G5" evidence="1">
    <location>
        <begin position="647"/>
        <end position="649"/>
    </location>
</feature>
<feature type="compositionally biased region" description="Low complexity" evidence="3">
    <location>
        <begin position="62"/>
        <end position="151"/>
    </location>
</feature>
<feature type="compositionally biased region" description="Pro residues" evidence="3">
    <location>
        <begin position="178"/>
        <end position="190"/>
    </location>
</feature>
<feature type="compositionally biased region" description="Pro residues" evidence="3">
    <location>
        <begin position="213"/>
        <end position="230"/>
    </location>
</feature>
<feature type="compositionally biased region" description="Gly residues" evidence="3">
    <location>
        <begin position="231"/>
        <end position="243"/>
    </location>
</feature>
<feature type="compositionally biased region" description="Gly residues" evidence="3">
    <location>
        <begin position="255"/>
        <end position="271"/>
    </location>
</feature>
<feature type="compositionally biased region" description="Low complexity" evidence="3">
    <location>
        <begin position="273"/>
        <end position="286"/>
    </location>
</feature>
<feature type="compositionally biased region" description="Gly residues" evidence="3">
    <location>
        <begin position="329"/>
        <end position="372"/>
    </location>
</feature>
<feature type="compositionally biased region" description="Basic residues" evidence="3">
    <location>
        <begin position="376"/>
        <end position="385"/>
    </location>
</feature>
<feature type="binding site" evidence="2">
    <location>
        <begin position="507"/>
        <end position="514"/>
    </location>
    <ligand>
        <name>GTP</name>
        <dbReference type="ChEBI" id="CHEBI:37565"/>
    </ligand>
</feature>
<feature type="binding site" evidence="2">
    <location>
        <begin position="557"/>
        <end position="561"/>
    </location>
    <ligand>
        <name>GTP</name>
        <dbReference type="ChEBI" id="CHEBI:37565"/>
    </ligand>
</feature>
<feature type="binding site" evidence="2">
    <location>
        <begin position="611"/>
        <end position="614"/>
    </location>
    <ligand>
        <name>GTP</name>
        <dbReference type="ChEBI" id="CHEBI:37565"/>
    </ligand>
</feature>
<organism>
    <name type="scientific">Corynebacterium glutamicum (strain R)</name>
    <dbReference type="NCBI Taxonomy" id="340322"/>
    <lineage>
        <taxon>Bacteria</taxon>
        <taxon>Bacillati</taxon>
        <taxon>Actinomycetota</taxon>
        <taxon>Actinomycetes</taxon>
        <taxon>Mycobacteriales</taxon>
        <taxon>Corynebacteriaceae</taxon>
        <taxon>Corynebacterium</taxon>
    </lineage>
</organism>
<reference key="1">
    <citation type="journal article" date="2007" name="Microbiology">
        <title>Comparative analysis of the Corynebacterium glutamicum group and complete genome sequence of strain R.</title>
        <authorList>
            <person name="Yukawa H."/>
            <person name="Omumasaba C.A."/>
            <person name="Nonaka H."/>
            <person name="Kos P."/>
            <person name="Okai N."/>
            <person name="Suzuki N."/>
            <person name="Suda M."/>
            <person name="Tsuge Y."/>
            <person name="Watanabe J."/>
            <person name="Ikeda Y."/>
            <person name="Vertes A.A."/>
            <person name="Inui M."/>
        </authorList>
    </citation>
    <scope>NUCLEOTIDE SEQUENCE [LARGE SCALE GENOMIC DNA]</scope>
    <source>
        <strain>R</strain>
    </source>
</reference>